<keyword id="KW-1185">Reference proteome</keyword>
<keyword id="KW-0687">Ribonucleoprotein</keyword>
<keyword id="KW-0689">Ribosomal protein</keyword>
<keyword id="KW-0694">RNA-binding</keyword>
<keyword id="KW-0699">rRNA-binding</keyword>
<keyword id="KW-0820">tRNA-binding</keyword>
<organism>
    <name type="scientific">Macrococcus caseolyticus (strain JCSC5402)</name>
    <name type="common">Macrococcoides caseolyticum</name>
    <dbReference type="NCBI Taxonomy" id="458233"/>
    <lineage>
        <taxon>Bacteria</taxon>
        <taxon>Bacillati</taxon>
        <taxon>Bacillota</taxon>
        <taxon>Bacilli</taxon>
        <taxon>Bacillales</taxon>
        <taxon>Staphylococcaceae</taxon>
        <taxon>Macrococcoides</taxon>
    </lineage>
</organism>
<comment type="function">
    <text evidence="1">One of the primary rRNA binding proteins, it binds directly to 16S rRNA where it nucleates assembly of the head domain of the 30S subunit. Is located at the subunit interface close to the decoding center, probably blocks exit of the E-site tRNA.</text>
</comment>
<comment type="subunit">
    <text evidence="1">Part of the 30S ribosomal subunit. Contacts proteins S9 and S11.</text>
</comment>
<comment type="similarity">
    <text evidence="1">Belongs to the universal ribosomal protein uS7 family.</text>
</comment>
<name>RS7_MACCJ</name>
<reference key="1">
    <citation type="journal article" date="2009" name="J. Bacteriol.">
        <title>Complete genome sequence of Macrococcus caseolyticus strain JCSCS5402, reflecting the ancestral genome of the human-pathogenic staphylococci.</title>
        <authorList>
            <person name="Baba T."/>
            <person name="Kuwahara-Arai K."/>
            <person name="Uchiyama I."/>
            <person name="Takeuchi F."/>
            <person name="Ito T."/>
            <person name="Hiramatsu K."/>
        </authorList>
    </citation>
    <scope>NUCLEOTIDE SEQUENCE [LARGE SCALE GENOMIC DNA]</scope>
    <source>
        <strain>JCSC5402</strain>
    </source>
</reference>
<proteinExistence type="inferred from homology"/>
<accession>B9E8Q2</accession>
<evidence type="ECO:0000255" key="1">
    <source>
        <dbReference type="HAMAP-Rule" id="MF_00480"/>
    </source>
</evidence>
<evidence type="ECO:0000305" key="2"/>
<feature type="chain" id="PRO_1000135609" description="Small ribosomal subunit protein uS7">
    <location>
        <begin position="1"/>
        <end position="156"/>
    </location>
</feature>
<sequence>MPRKGPVAKRDVLPDPIHNSKLVTKLINKIMIDGKRGTAQKILYNAFDLVQERSGRDAMEVFEEAINNIMPVLEVKARRVGGSNYQVPVEVRAERRTTLGLRWLVNYSRLRGEKTMEERLANEILDAANNTGGAVKKREDTHKMAEANKAFAHYRW</sequence>
<gene>
    <name evidence="1" type="primary">rpsG</name>
    <name type="ordered locus">MCCL_1863</name>
</gene>
<protein>
    <recommendedName>
        <fullName evidence="1">Small ribosomal subunit protein uS7</fullName>
    </recommendedName>
    <alternativeName>
        <fullName evidence="2">30S ribosomal protein S7</fullName>
    </alternativeName>
</protein>
<dbReference type="EMBL" id="AP009484">
    <property type="protein sequence ID" value="BAH18570.1"/>
    <property type="molecule type" value="Genomic_DNA"/>
</dbReference>
<dbReference type="RefSeq" id="WP_015912362.1">
    <property type="nucleotide sequence ID" value="NC_011999.1"/>
</dbReference>
<dbReference type="SMR" id="B9E8Q2"/>
<dbReference type="STRING" id="458233.MCCL_1863"/>
<dbReference type="GeneID" id="35296479"/>
<dbReference type="GeneID" id="61130248"/>
<dbReference type="KEGG" id="mcl:MCCL_1863"/>
<dbReference type="eggNOG" id="COG0049">
    <property type="taxonomic scope" value="Bacteria"/>
</dbReference>
<dbReference type="HOGENOM" id="CLU_072226_1_1_9"/>
<dbReference type="OrthoDB" id="9807653at2"/>
<dbReference type="Proteomes" id="UP000001383">
    <property type="component" value="Chromosome"/>
</dbReference>
<dbReference type="GO" id="GO:0015935">
    <property type="term" value="C:small ribosomal subunit"/>
    <property type="evidence" value="ECO:0007669"/>
    <property type="project" value="InterPro"/>
</dbReference>
<dbReference type="GO" id="GO:0019843">
    <property type="term" value="F:rRNA binding"/>
    <property type="evidence" value="ECO:0007669"/>
    <property type="project" value="UniProtKB-UniRule"/>
</dbReference>
<dbReference type="GO" id="GO:0003735">
    <property type="term" value="F:structural constituent of ribosome"/>
    <property type="evidence" value="ECO:0007669"/>
    <property type="project" value="InterPro"/>
</dbReference>
<dbReference type="GO" id="GO:0000049">
    <property type="term" value="F:tRNA binding"/>
    <property type="evidence" value="ECO:0007669"/>
    <property type="project" value="UniProtKB-UniRule"/>
</dbReference>
<dbReference type="GO" id="GO:0006412">
    <property type="term" value="P:translation"/>
    <property type="evidence" value="ECO:0007669"/>
    <property type="project" value="UniProtKB-UniRule"/>
</dbReference>
<dbReference type="CDD" id="cd14869">
    <property type="entry name" value="uS7_Bacteria"/>
    <property type="match status" value="1"/>
</dbReference>
<dbReference type="FunFam" id="1.10.455.10:FF:000001">
    <property type="entry name" value="30S ribosomal protein S7"/>
    <property type="match status" value="1"/>
</dbReference>
<dbReference type="Gene3D" id="1.10.455.10">
    <property type="entry name" value="Ribosomal protein S7 domain"/>
    <property type="match status" value="1"/>
</dbReference>
<dbReference type="HAMAP" id="MF_00480_B">
    <property type="entry name" value="Ribosomal_uS7_B"/>
    <property type="match status" value="1"/>
</dbReference>
<dbReference type="InterPro" id="IPR000235">
    <property type="entry name" value="Ribosomal_uS7"/>
</dbReference>
<dbReference type="InterPro" id="IPR005717">
    <property type="entry name" value="Ribosomal_uS7_bac/org-type"/>
</dbReference>
<dbReference type="InterPro" id="IPR020606">
    <property type="entry name" value="Ribosomal_uS7_CS"/>
</dbReference>
<dbReference type="InterPro" id="IPR023798">
    <property type="entry name" value="Ribosomal_uS7_dom"/>
</dbReference>
<dbReference type="InterPro" id="IPR036823">
    <property type="entry name" value="Ribosomal_uS7_dom_sf"/>
</dbReference>
<dbReference type="NCBIfam" id="TIGR01029">
    <property type="entry name" value="rpsG_bact"/>
    <property type="match status" value="1"/>
</dbReference>
<dbReference type="PANTHER" id="PTHR11205">
    <property type="entry name" value="RIBOSOMAL PROTEIN S7"/>
    <property type="match status" value="1"/>
</dbReference>
<dbReference type="Pfam" id="PF00177">
    <property type="entry name" value="Ribosomal_S7"/>
    <property type="match status" value="1"/>
</dbReference>
<dbReference type="PIRSF" id="PIRSF002122">
    <property type="entry name" value="RPS7p_RPS7a_RPS5e_RPS7o"/>
    <property type="match status" value="1"/>
</dbReference>
<dbReference type="SUPFAM" id="SSF47973">
    <property type="entry name" value="Ribosomal protein S7"/>
    <property type="match status" value="1"/>
</dbReference>
<dbReference type="PROSITE" id="PS00052">
    <property type="entry name" value="RIBOSOMAL_S7"/>
    <property type="match status" value="1"/>
</dbReference>